<dbReference type="EMBL" id="CP000463">
    <property type="protein sequence ID" value="ABJ07243.1"/>
    <property type="molecule type" value="Genomic_DNA"/>
</dbReference>
<dbReference type="SMR" id="Q07LE1"/>
<dbReference type="STRING" id="316055.RPE_3310"/>
<dbReference type="KEGG" id="rpe:RPE_3310"/>
<dbReference type="eggNOG" id="COG0238">
    <property type="taxonomic scope" value="Bacteria"/>
</dbReference>
<dbReference type="HOGENOM" id="CLU_148710_2_3_5"/>
<dbReference type="OrthoDB" id="9812008at2"/>
<dbReference type="GO" id="GO:0022627">
    <property type="term" value="C:cytosolic small ribosomal subunit"/>
    <property type="evidence" value="ECO:0007669"/>
    <property type="project" value="TreeGrafter"/>
</dbReference>
<dbReference type="GO" id="GO:0070181">
    <property type="term" value="F:small ribosomal subunit rRNA binding"/>
    <property type="evidence" value="ECO:0007669"/>
    <property type="project" value="TreeGrafter"/>
</dbReference>
<dbReference type="GO" id="GO:0003735">
    <property type="term" value="F:structural constituent of ribosome"/>
    <property type="evidence" value="ECO:0007669"/>
    <property type="project" value="InterPro"/>
</dbReference>
<dbReference type="GO" id="GO:0006412">
    <property type="term" value="P:translation"/>
    <property type="evidence" value="ECO:0007669"/>
    <property type="project" value="UniProtKB-UniRule"/>
</dbReference>
<dbReference type="FunFam" id="4.10.640.10:FF:000006">
    <property type="entry name" value="30S ribosomal protein S18"/>
    <property type="match status" value="1"/>
</dbReference>
<dbReference type="Gene3D" id="4.10.640.10">
    <property type="entry name" value="Ribosomal protein S18"/>
    <property type="match status" value="1"/>
</dbReference>
<dbReference type="HAMAP" id="MF_00270">
    <property type="entry name" value="Ribosomal_bS18"/>
    <property type="match status" value="1"/>
</dbReference>
<dbReference type="InterPro" id="IPR001648">
    <property type="entry name" value="Ribosomal_bS18"/>
</dbReference>
<dbReference type="InterPro" id="IPR018275">
    <property type="entry name" value="Ribosomal_bS18_CS"/>
</dbReference>
<dbReference type="InterPro" id="IPR036870">
    <property type="entry name" value="Ribosomal_bS18_sf"/>
</dbReference>
<dbReference type="NCBIfam" id="TIGR00165">
    <property type="entry name" value="S18"/>
    <property type="match status" value="1"/>
</dbReference>
<dbReference type="PANTHER" id="PTHR13479">
    <property type="entry name" value="30S RIBOSOMAL PROTEIN S18"/>
    <property type="match status" value="1"/>
</dbReference>
<dbReference type="PANTHER" id="PTHR13479:SF40">
    <property type="entry name" value="SMALL RIBOSOMAL SUBUNIT PROTEIN BS18M"/>
    <property type="match status" value="1"/>
</dbReference>
<dbReference type="Pfam" id="PF01084">
    <property type="entry name" value="Ribosomal_S18"/>
    <property type="match status" value="1"/>
</dbReference>
<dbReference type="PRINTS" id="PR00974">
    <property type="entry name" value="RIBOSOMALS18"/>
</dbReference>
<dbReference type="SUPFAM" id="SSF46911">
    <property type="entry name" value="Ribosomal protein S18"/>
    <property type="match status" value="1"/>
</dbReference>
<dbReference type="PROSITE" id="PS00057">
    <property type="entry name" value="RIBOSOMAL_S18"/>
    <property type="match status" value="1"/>
</dbReference>
<accession>Q07LE1</accession>
<sequence length="79" mass="9121">MAEAGARRPFFRRRKTCPFTGPNAPKIDYKDSKLLMRYVSERGKIVPSRITAVSAKKQRELARAIKRARFLGLLPYVIR</sequence>
<protein>
    <recommendedName>
        <fullName evidence="1">Small ribosomal subunit protein bS18</fullName>
    </recommendedName>
    <alternativeName>
        <fullName evidence="2">30S ribosomal protein S18</fullName>
    </alternativeName>
</protein>
<feature type="chain" id="PRO_1000003585" description="Small ribosomal subunit protein bS18">
    <location>
        <begin position="1"/>
        <end position="79"/>
    </location>
</feature>
<evidence type="ECO:0000255" key="1">
    <source>
        <dbReference type="HAMAP-Rule" id="MF_00270"/>
    </source>
</evidence>
<evidence type="ECO:0000305" key="2"/>
<proteinExistence type="inferred from homology"/>
<comment type="function">
    <text evidence="1">Binds as a heterodimer with protein bS6 to the central domain of the 16S rRNA, where it helps stabilize the platform of the 30S subunit.</text>
</comment>
<comment type="subunit">
    <text evidence="1">Part of the 30S ribosomal subunit. Forms a tight heterodimer with protein bS6.</text>
</comment>
<comment type="similarity">
    <text evidence="1">Belongs to the bacterial ribosomal protein bS18 family.</text>
</comment>
<reference key="1">
    <citation type="submission" date="2006-09" db="EMBL/GenBank/DDBJ databases">
        <title>Complete sequence of Rhodopseudomonas palustris BisA53.</title>
        <authorList>
            <consortium name="US DOE Joint Genome Institute"/>
            <person name="Copeland A."/>
            <person name="Lucas S."/>
            <person name="Lapidus A."/>
            <person name="Barry K."/>
            <person name="Detter J.C."/>
            <person name="Glavina del Rio T."/>
            <person name="Hammon N."/>
            <person name="Israni S."/>
            <person name="Dalin E."/>
            <person name="Tice H."/>
            <person name="Pitluck S."/>
            <person name="Chain P."/>
            <person name="Malfatti S."/>
            <person name="Shin M."/>
            <person name="Vergez L."/>
            <person name="Schmutz J."/>
            <person name="Larimer F."/>
            <person name="Land M."/>
            <person name="Hauser L."/>
            <person name="Pelletier D.A."/>
            <person name="Kyrpides N."/>
            <person name="Kim E."/>
            <person name="Harwood C.S."/>
            <person name="Oda Y."/>
            <person name="Richardson P."/>
        </authorList>
    </citation>
    <scope>NUCLEOTIDE SEQUENCE [LARGE SCALE GENOMIC DNA]</scope>
    <source>
        <strain>BisA53</strain>
    </source>
</reference>
<name>RS18_RHOP5</name>
<keyword id="KW-0687">Ribonucleoprotein</keyword>
<keyword id="KW-0689">Ribosomal protein</keyword>
<keyword id="KW-0694">RNA-binding</keyword>
<keyword id="KW-0699">rRNA-binding</keyword>
<gene>
    <name evidence="1" type="primary">rpsR</name>
    <name type="ordered locus">RPE_3310</name>
</gene>
<organism>
    <name type="scientific">Rhodopseudomonas palustris (strain BisA53)</name>
    <dbReference type="NCBI Taxonomy" id="316055"/>
    <lineage>
        <taxon>Bacteria</taxon>
        <taxon>Pseudomonadati</taxon>
        <taxon>Pseudomonadota</taxon>
        <taxon>Alphaproteobacteria</taxon>
        <taxon>Hyphomicrobiales</taxon>
        <taxon>Nitrobacteraceae</taxon>
        <taxon>Rhodopseudomonas</taxon>
    </lineage>
</organism>